<feature type="chain" id="PRO_0000076614" description="CCAAT/enhancer-binding protein alpha">
    <location>
        <begin position="1"/>
        <end position="359"/>
    </location>
</feature>
<feature type="domain" description="bZIP" evidence="3">
    <location>
        <begin position="283"/>
        <end position="346"/>
    </location>
</feature>
<feature type="DNA-binding region" evidence="1">
    <location>
        <begin position="286"/>
        <end position="301"/>
    </location>
</feature>
<feature type="region of interest" description="Required to repress E2F1:TFDP1-mediated transcription, to inhibit cell cycle and to induce adipocyte differentiation" evidence="1">
    <location>
        <begin position="1"/>
        <end position="70"/>
    </location>
</feature>
<feature type="region of interest" description="Disordered" evidence="4">
    <location>
        <begin position="1"/>
        <end position="55"/>
    </location>
</feature>
<feature type="region of interest" description="Required for interaction with TRIB1" evidence="2">
    <location>
        <begin position="54"/>
        <end position="72"/>
    </location>
</feature>
<feature type="region of interest" description="Required to induce adipocyte differentiation" evidence="1">
    <location>
        <begin position="126"/>
        <end position="200"/>
    </location>
</feature>
<feature type="region of interest" description="Disordered" evidence="4">
    <location>
        <begin position="176"/>
        <end position="195"/>
    </location>
</feature>
<feature type="region of interest" description="Required to functionally cooperate with SREBF1 in promoter activation" evidence="11">
    <location>
        <begin position="180"/>
        <end position="194"/>
    </location>
</feature>
<feature type="region of interest" description="Disordered" evidence="4">
    <location>
        <begin position="213"/>
        <end position="293"/>
    </location>
</feature>
<feature type="region of interest" description="Interaction with FOXO1" evidence="12">
    <location>
        <begin position="240"/>
        <end position="359"/>
    </location>
</feature>
<feature type="region of interest" description="Basic motif" evidence="3">
    <location>
        <begin position="287"/>
        <end position="314"/>
    </location>
</feature>
<feature type="region of interest" description="Leucine-zipper" evidence="3">
    <location>
        <begin position="318"/>
        <end position="346"/>
    </location>
</feature>
<feature type="compositionally biased region" description="Low complexity" evidence="4">
    <location>
        <begin position="29"/>
        <end position="38"/>
    </location>
</feature>
<feature type="compositionally biased region" description="Pro residues" evidence="4">
    <location>
        <begin position="39"/>
        <end position="49"/>
    </location>
</feature>
<feature type="compositionally biased region" description="Pro residues" evidence="4">
    <location>
        <begin position="179"/>
        <end position="191"/>
    </location>
</feature>
<feature type="compositionally biased region" description="Pro residues" evidence="4">
    <location>
        <begin position="220"/>
        <end position="232"/>
    </location>
</feature>
<feature type="compositionally biased region" description="Low complexity" evidence="4">
    <location>
        <begin position="233"/>
        <end position="255"/>
    </location>
</feature>
<feature type="compositionally biased region" description="Gly residues" evidence="4">
    <location>
        <begin position="261"/>
        <end position="272"/>
    </location>
</feature>
<feature type="compositionally biased region" description="Basic and acidic residues" evidence="4">
    <location>
        <begin position="277"/>
        <end position="293"/>
    </location>
</feature>
<feature type="modified residue" description="N6-acetyllysine; alternate" evidence="2">
    <location>
        <position position="159"/>
    </location>
</feature>
<feature type="modified residue" description="Phosphoserine" evidence="7">
    <location>
        <position position="193"/>
    </location>
</feature>
<feature type="modified residue" description="Phosphothreonine; by GSK3" evidence="11">
    <location>
        <position position="222"/>
    </location>
</feature>
<feature type="modified residue" description="Phosphothreonine; by GSK3" evidence="11">
    <location>
        <position position="226"/>
    </location>
</feature>
<feature type="modified residue" description="Phosphoserine; by GSK3" evidence="26">
    <location>
        <position position="230"/>
    </location>
</feature>
<feature type="cross-link" description="Glycyl lysine isopeptide (Lys-Gly) (interchain with G-Cter in SUMO); alternate" evidence="1">
    <location>
        <position position="159"/>
    </location>
</feature>
<feature type="cross-link" description="Glycyl lysine isopeptide (Lys-Gly) (interchain with G-Cter in SUMO2); alternate" evidence="2">
    <location>
        <position position="159"/>
    </location>
</feature>
<feature type="splice variant" id="VSP_057549" description="In isoform 3." evidence="20">
    <location>
        <begin position="1"/>
        <end position="117"/>
    </location>
</feature>
<feature type="splice variant" id="VSP_057550" description="In isoform 2." evidence="20">
    <location>
        <begin position="1"/>
        <end position="14"/>
    </location>
</feature>
<feature type="splice variant" id="VSP_057608" description="In isoform 4.">
    <original>M</original>
    <variation>MRGREPVGALGGRRRQRRHAQAGGRRGSPCRENSNSPM</variation>
    <location>
        <position position="1"/>
    </location>
</feature>
<feature type="mutagenesis site" description="No effect on DNA-binding or interaction with CDK2 and CDK4. No effect on cell cycle inhibition." evidence="7">
    <original>PPPPPPP</original>
    <variation>APPPAPA</variation>
    <location>
        <begin position="182"/>
        <end position="188"/>
    </location>
</feature>
<feature type="mutagenesis site" description="No effect on DNA-binding or interaction with CDK2 and CDK4. No effect on cell cycle inhibition." evidence="7">
    <original>PPP</original>
    <variation>AAA</variation>
    <location>
        <begin position="184"/>
        <end position="186"/>
    </location>
</feature>
<feature type="mutagenesis site" description="No effect on DNA-binding. Loss of interaction with CDK2 and CDK4 as well as cell cycle inhibition." evidence="7">
    <original>S</original>
    <variation>A</variation>
    <location>
        <position position="193"/>
    </location>
</feature>
<feature type="mutagenesis site" description="Decreases phosphorylated form. Deregulation of hepatic glucose metabolism." evidence="11">
    <original>TPPPTPVPS</original>
    <variation>APPPAPVPA</variation>
    <location>
        <begin position="222"/>
        <end position="230"/>
    </location>
</feature>
<feature type="mutagenesis site" description="No effect on DNA-binding, represses E2F1:TFDP1-mediated transcription and causes adipose hypoplasia and myeloid dysplasia." evidence="5">
    <original>Y</original>
    <variation>A</variation>
    <location>
        <position position="286"/>
    </location>
</feature>
<feature type="mutagenesis site" description="No effect on DNA-binding, no effect on repression of E2F1:TFDP1-mediated transcription and no effect on adipogenesis and granulopoiesis; when associated with A-291." evidence="5">
    <original>V</original>
    <variation>A</variation>
    <location>
        <position position="288"/>
    </location>
</feature>
<feature type="mutagenesis site" description="No effect on DNA-binding, no effect on repression of E2F1:TFDP1-mediated transcription and no effect on adipogenesis and granulopoiesis; when associated with A-288." evidence="5">
    <original>E</original>
    <variation>A</variation>
    <location>
        <position position="291"/>
    </location>
</feature>
<feature type="mutagenesis site" description="No effect on DNA-binding, represses E2F1:TFDP1-mediated transcription and causes adipose hypoplasia and myeloid dysplasia; when associated with A-298." evidence="5">
    <original>I</original>
    <variation>A</variation>
    <location>
        <position position="295"/>
    </location>
</feature>
<feature type="mutagenesis site" description="No effect on DNA-binding, represses E2F1:TFDP1-mediated transcription and causes adipose hypoplasia and myeloid dysplasia; when associated with A-295." evidence="5">
    <original>R</original>
    <variation>A</variation>
    <location>
        <position position="298"/>
    </location>
</feature>
<feature type="sequence conflict" description="In Ref. 1; AAA37374." evidence="25" ref="1">
    <original>AFGFPRGAGPAPPPAPPAAPEPLGG</original>
    <variation>RLWLSPGRGPRAAPSPTCRPGAAGR</variation>
    <location>
        <begin position="30"/>
        <end position="54"/>
    </location>
</feature>
<feature type="sequence conflict" description="In Ref. 1; AAA37374." evidence="25" ref="1">
    <original>GNCA</original>
    <variation>ATAREARGCGTALGRPPGWRPRGWFRVAGSLGCPGRASQD</variation>
    <location>
        <begin position="356"/>
        <end position="359"/>
    </location>
</feature>
<sequence length="359" mass="37430">MESADFYEVEPRPPMSSHLQSPPHAPSNAAFGFPRGAGPAPPPAPPAAPEPLGGICEHETSIDISAYIDPAAFNDEFLADLFQHSRQQEKAKAAAGPAGGGGDFDYPGAPAGPGGAVMSAGAHGPPPGYGCAAAGYLDGRLEPLYERVGAPALRPLVIKQEPREEDEAKQLALAGLFPYQPPPPPPPPHPHASPAHLAAPHLQFQIAHCGQTTMHLQPGHPTPPPTPVPSPHAAPALGAAGLPGPGSALKGLAGAHPDLRTGGGGGGSGAGAGKAKKSVDKNSNEYRVRRERNNIAVRKSRDKAKQRNVETQQKVLELTSDNDRLRKRVEQLSRELDTLRGIFRQLPESSLVKAMGNCA</sequence>
<keyword id="KW-0007">Acetylation</keyword>
<keyword id="KW-0010">Activator</keyword>
<keyword id="KW-0024">Alternative initiation</keyword>
<keyword id="KW-0217">Developmental protein</keyword>
<keyword id="KW-0238">DNA-binding</keyword>
<keyword id="KW-1017">Isopeptide bond</keyword>
<keyword id="KW-0539">Nucleus</keyword>
<keyword id="KW-0597">Phosphoprotein</keyword>
<keyword id="KW-1185">Reference proteome</keyword>
<keyword id="KW-0804">Transcription</keyword>
<keyword id="KW-0805">Transcription regulation</keyword>
<keyword id="KW-0832">Ubl conjugation</keyword>
<reference key="1">
    <citation type="journal article" date="1991" name="Proc. Natl. Acad. Sci. U.S.A.">
        <title>CCAAT/enhancer binding protein gene promoter: binding of nuclear factors during differentiation of 3T3-L1 preadipocytes.</title>
        <authorList>
            <person name="Christy R.J."/>
            <person name="Kaestner K.H."/>
            <person name="Geiman D.E."/>
            <person name="Lane M.D."/>
        </authorList>
    </citation>
    <scope>NUCLEOTIDE SEQUENCE [GENOMIC DNA]</scope>
</reference>
<reference key="2">
    <citation type="journal article" date="2009" name="PLoS Biol.">
        <title>Lineage-specific biology revealed by a finished genome assembly of the mouse.</title>
        <authorList>
            <person name="Church D.M."/>
            <person name="Goodstadt L."/>
            <person name="Hillier L.W."/>
            <person name="Zody M.C."/>
            <person name="Goldstein S."/>
            <person name="She X."/>
            <person name="Bult C.J."/>
            <person name="Agarwala R."/>
            <person name="Cherry J.L."/>
            <person name="DiCuccio M."/>
            <person name="Hlavina W."/>
            <person name="Kapustin Y."/>
            <person name="Meric P."/>
            <person name="Maglott D."/>
            <person name="Birtle Z."/>
            <person name="Marques A.C."/>
            <person name="Graves T."/>
            <person name="Zhou S."/>
            <person name="Teague B."/>
            <person name="Potamousis K."/>
            <person name="Churas C."/>
            <person name="Place M."/>
            <person name="Herschleb J."/>
            <person name="Runnheim R."/>
            <person name="Forrest D."/>
            <person name="Amos-Landgraf J."/>
            <person name="Schwartz D.C."/>
            <person name="Cheng Z."/>
            <person name="Lindblad-Toh K."/>
            <person name="Eichler E.E."/>
            <person name="Ponting C.P."/>
        </authorList>
    </citation>
    <scope>NUCLEOTIDE SEQUENCE [LARGE SCALE GENOMIC DNA]</scope>
    <source>
        <strain>C57BL/6J</strain>
    </source>
</reference>
<reference key="3">
    <citation type="journal article" date="2004" name="Genome Res.">
        <title>The status, quality, and expansion of the NIH full-length cDNA project: the Mammalian Gene Collection (MGC).</title>
        <authorList>
            <consortium name="The MGC Project Team"/>
        </authorList>
    </citation>
    <scope>NUCLEOTIDE SEQUENCE [LARGE SCALE MRNA] (ISOFORMS 1; 2 AND 3)</scope>
    <source>
        <strain>FVB/N</strain>
        <tissue>Liver</tissue>
    </source>
</reference>
<reference key="4">
    <citation type="journal article" date="1991" name="EMBO J.">
        <title>The CCAAT/enhancer binding protein and its role in adipocyte differentiation: evidence for direct involvement in terminal adipocyte development.</title>
        <authorList>
            <person name="Samuelsson L."/>
            <person name="Stroemberg K."/>
            <person name="Vikman K."/>
            <person name="Bjursell G."/>
            <person name="Enerbaeck S."/>
        </authorList>
    </citation>
    <scope>FUNCTION</scope>
</reference>
<reference key="5">
    <citation type="journal article" date="1993" name="Proc. Natl. Acad. Sci. U.S.A.">
        <title>A 30-kDa alternative translation product of the CCAAT/enhancer binding protein alpha message: transcriptional activator lacking antimitotic activity.</title>
        <authorList>
            <person name="Lin F.T."/>
            <person name="MacDougald O.A."/>
            <person name="Diehl A.M."/>
            <person name="Lane M.D."/>
        </authorList>
    </citation>
    <scope>FUNCTION</scope>
    <scope>ALTERNATIVE TRANSLATIONAL INITIATION</scope>
    <scope>TISSUE SPECIFICITY</scope>
    <scope>SUBCELLULAR LOCATION</scope>
    <scope>DNA-BINDING</scope>
</reference>
<reference key="6">
    <citation type="journal article" date="1994" name="Proc. Natl. Acad. Sci. U.S.A.">
        <title>CCAAT/enhancer binding protein alpha is sufficient to initiate the 3T3-L1 adipocyte differentiation program.</title>
        <authorList>
            <person name="Lin F.T."/>
            <person name="Lane M.D."/>
        </authorList>
    </citation>
    <scope>FUNCTION</scope>
</reference>
<reference key="7">
    <citation type="journal article" date="1996" name="J. Biol. Chem.">
        <title>Increased hepatic cell proliferation and lung abnormalities in mice deficient in CCAAT/enhancer binding protein alpha.</title>
        <authorList>
            <person name="Flodby P."/>
            <person name="Barlow C."/>
            <person name="Kylefjord H."/>
            <person name="Ahrlund-Richter L."/>
            <person name="Xanthopoulos K.G."/>
        </authorList>
    </citation>
    <scope>FUNCTION</scope>
    <scope>DISRUPTION PHENOTYPE</scope>
</reference>
<reference key="8">
    <citation type="journal article" date="2001" name="Cell">
        <title>E2F repression by C/EBPalpha is required for adipogenesis and granulopoiesis in vivo.</title>
        <authorList>
            <person name="Porse B.T."/>
            <person name="Pedersen T.A."/>
            <person name="Xu X."/>
            <person name="Lindberg B."/>
            <person name="Wewer U.M."/>
            <person name="Friis-Hansen L."/>
            <person name="Nerlov C."/>
        </authorList>
    </citation>
    <scope>FUNCTION</scope>
    <scope>MUTAGENESIS OF TYR-286; VAL-288; GLU-291; ILE-295 AND ARG-298</scope>
    <scope>DNA-BINDING</scope>
</reference>
<reference key="9">
    <citation type="journal article" date="2004" name="Genes Dev.">
        <title>Liver tumors escape negative control of proliferation via PI3K/Akt-mediated block of C/EBP alpha growth inhibitory activity.</title>
        <authorList>
            <person name="Wang G.L."/>
            <person name="Iakova P."/>
            <person name="Wilde M."/>
            <person name="Awad S."/>
            <person name="Timchenko N.A."/>
        </authorList>
    </citation>
    <scope>FUNCTION</scope>
    <scope>MUTAGENESIS OF 182-PRO--PRO-188 AND SER-193</scope>
    <scope>INTERACTION WITH CDK2; CDK4 AND SMARCA2</scope>
    <scope>PHOSPHORYLATION AT SER-193</scope>
</reference>
<reference key="10">
    <citation type="journal article" date="2004" name="Immunity">
        <title>Enhancement of hematopoietic stem cell repopulating capacity and self-renewal in the absence of the transcription factor C/EBP alpha.</title>
        <authorList>
            <person name="Zhang P."/>
            <person name="Iwasaki-Arai J."/>
            <person name="Iwasaki H."/>
            <person name="Fenyus M.L."/>
            <person name="Dayaram T."/>
            <person name="Owens B.M."/>
            <person name="Shigematsu H."/>
            <person name="Levantini E."/>
            <person name="Huettner C.S."/>
            <person name="Lekstrom-Himes J.A."/>
            <person name="Akashi K."/>
            <person name="Tenen D.G."/>
        </authorList>
    </citation>
    <scope>FUNCTION</scope>
    <scope>DISRUPTION PHENOTYPE</scope>
</reference>
<reference key="11">
    <citation type="journal article" date="2004" name="J. Biol. Chem.">
        <title>The CCAAT enhancer-binding protein alpha (C/EBPalpha) requires a SWI/SNF complex for proliferation arrest.</title>
        <authorList>
            <person name="Muller C."/>
            <person name="Calkhoven C.F."/>
            <person name="Sha X."/>
            <person name="Leutz A."/>
        </authorList>
    </citation>
    <scope>FUNCTION</scope>
</reference>
<reference key="12">
    <citation type="journal article" date="2004" name="Mol. Cell. Biol.">
        <title>Essential requirement of CCAAT/enhancer binding proteins in embryogenesis.</title>
        <authorList>
            <person name="Begay V."/>
            <person name="Smink J."/>
            <person name="Leutz A."/>
        </authorList>
    </citation>
    <scope>FUNCTION</scope>
    <scope>DEVELOPMENTAL STAGE</scope>
    <scope>DISRUPTION PHENOTYPE</scope>
</reference>
<reference key="13">
    <citation type="journal article" date="2006" name="J. Biol. Chem.">
        <title>SIRT1 regulates adiponectin gene expression through Foxo1-C/enhancer-binding protein alpha transcriptional complex.</title>
        <authorList>
            <person name="Qiao L."/>
            <person name="Shao J."/>
        </authorList>
    </citation>
    <scope>FUNCTION</scope>
    <scope>INTERACTION WITH FOXO1</scope>
</reference>
<reference key="14">
    <citation type="journal article" date="2007" name="EMBO J.">
        <title>Distinct C/EBPalpha motifs regulate lipogenic and gluconeogenic gene expression in vivo.</title>
        <authorList>
            <person name="Pedersen T.A."/>
            <person name="Bereshchenko O."/>
            <person name="Garcia-Silva S."/>
            <person name="Ermakova O."/>
            <person name="Kurz E."/>
            <person name="Mandrup S."/>
            <person name="Porse B.T."/>
            <person name="Nerlov C."/>
        </authorList>
    </citation>
    <scope>FUNCTION</scope>
    <scope>INTERACTION WITH SREBF1</scope>
    <scope>MUTAGENESIS OF 222-THR--SER-230</scope>
    <scope>PHOSPHORYLATION AT THR-222; THR-226 AND SER-230</scope>
</reference>
<reference key="15">
    <citation type="journal article" date="2007" name="EMBO J.">
        <title>Foxo1 links insulin signaling to C/EBPalpha and regulates gluconeogenesis during liver development.</title>
        <authorList>
            <person name="Sekine K."/>
            <person name="Chen Y.R."/>
            <person name="Kojima N."/>
            <person name="Ogata K."/>
            <person name="Fukamizu A."/>
            <person name="Miyajima A."/>
        </authorList>
    </citation>
    <scope>FUNCTION</scope>
    <scope>INTERACTION WITH FOXO1</scope>
</reference>
<reference key="16">
    <citation type="journal article" date="2009" name="Nature">
        <title>Initiation of myoblast to brown fat switch by a PRDM16-C/EBP-beta transcriptional complex.</title>
        <authorList>
            <person name="Kajimura S."/>
            <person name="Seale P."/>
            <person name="Kubota K."/>
            <person name="Lunsford E."/>
            <person name="Frangioni J.V."/>
            <person name="Gygi S.P."/>
            <person name="Spiegelman B.M."/>
        </authorList>
    </citation>
    <scope>INTERACTION WITH PRDM16</scope>
</reference>
<reference key="17">
    <citation type="journal article" date="2010" name="EMBO J.">
        <title>Nucleolar retention of a translational C/EBPalpha isoform stimulates rDNA transcription and cell size.</title>
        <authorList>
            <person name="Muller C."/>
            <person name="Bremer A."/>
            <person name="Schreiber S."/>
            <person name="Eichwald S."/>
            <person name="Calkhoven C.F."/>
        </authorList>
    </citation>
    <scope>ALTERNATIVE INITIATION</scope>
    <scope>IDENTIFICATION OF NON-CANONICAL INITIATION CODON</scope>
</reference>
<reference key="18">
    <citation type="journal article" date="2011" name="J. Biol. Chem.">
        <title>Regulation of adipocyte differentiation by the zinc finger protein ZNF638.</title>
        <authorList>
            <person name="Meruvu S."/>
            <person name="Hugendubler L."/>
            <person name="Mueller E."/>
        </authorList>
    </citation>
    <scope>INTERACTION WITH ZNF638</scope>
</reference>
<reference key="19">
    <citation type="journal article" date="2014" name="J. Exp. Med.">
        <title>Initiation of MLL-rearranged AML is dependent on C/EBPalpha.</title>
        <authorList>
            <person name="Ohlsson E."/>
            <person name="Hasemann M.S."/>
            <person name="Willer A."/>
            <person name="Lauridsen F.K."/>
            <person name="Rapin N."/>
            <person name="Jendholm J."/>
            <person name="Porse B.T."/>
        </authorList>
    </citation>
    <scope>FUNCTION</scope>
</reference>
<reference key="20">
    <citation type="journal article" date="2016" name="PLoS Genet.">
        <title>Comparative Transcriptomic and Epigenomic Analyses Reveal New Regulators of Murine Brown Adipogenesis.</title>
        <authorList>
            <person name="Brunmeir R."/>
            <person name="Wu J."/>
            <person name="Peng X."/>
            <person name="Kim S.Y."/>
            <person name="Julien S.G."/>
            <person name="Zhang Q."/>
            <person name="Xie W."/>
            <person name="Xu F."/>
        </authorList>
    </citation>
    <scope>INTERACTION WITH SIX1</scope>
</reference>
<reference key="21">
    <citation type="journal article" date="2022" name="Cell Metab.">
        <title>Obesity caused by an OVOL2 mutation reveals dual roles of OVOL2 in promoting thermogenesis and limiting white adipogenesis.</title>
        <authorList>
            <person name="Zhang Z."/>
            <person name="Jiang Y."/>
            <person name="Su L."/>
            <person name="Ludwig S."/>
            <person name="Zhang X."/>
            <person name="Tang M."/>
            <person name="Li X."/>
            <person name="Anderton P."/>
            <person name="Zhan X."/>
            <person name="Choi M."/>
            <person name="Russell J."/>
            <person name="Bu C.H."/>
            <person name="Lyon S."/>
            <person name="Xu D."/>
            <person name="Hildebrand S."/>
            <person name="Scott L."/>
            <person name="Quan J."/>
            <person name="Simpson R."/>
            <person name="Sun Q."/>
            <person name="Qin B."/>
            <person name="Collie T."/>
            <person name="Tadesse M."/>
            <person name="Moresco E.M.Y."/>
            <person name="Beutler B."/>
        </authorList>
    </citation>
    <scope>FUNCTION</scope>
    <scope>SUBCELLULAR LOCATION</scope>
    <scope>INTERACTION WITH OVOL2</scope>
</reference>
<accession>P53566</accession>
<accession>Q91XB6</accession>
<gene>
    <name evidence="27" type="primary">Cebpa</name>
    <name evidence="22" type="synonym">Cebp</name>
</gene>
<dbReference type="EMBL" id="M62362">
    <property type="protein sequence ID" value="AAA37374.1"/>
    <property type="molecule type" value="Genomic_DNA"/>
</dbReference>
<dbReference type="EMBL" id="AC150683">
    <property type="status" value="NOT_ANNOTATED_CDS"/>
    <property type="molecule type" value="Genomic_DNA"/>
</dbReference>
<dbReference type="EMBL" id="BC011118">
    <property type="protein sequence ID" value="AAH11118.1"/>
    <property type="molecule type" value="mRNA"/>
</dbReference>
<dbReference type="EMBL" id="BC028890">
    <property type="protein sequence ID" value="AAH28890.1"/>
    <property type="molecule type" value="mRNA"/>
</dbReference>
<dbReference type="EMBL" id="BC051102">
    <property type="protein sequence ID" value="AAH51102.1"/>
    <property type="molecule type" value="mRNA"/>
</dbReference>
<dbReference type="EMBL" id="BC058161">
    <property type="protein sequence ID" value="AAH58161.1"/>
    <property type="molecule type" value="mRNA"/>
</dbReference>
<dbReference type="CCDS" id="CCDS21145.1">
    <molecule id="P53566-1"/>
</dbReference>
<dbReference type="PIR" id="I49575">
    <property type="entry name" value="I49575"/>
</dbReference>
<dbReference type="RefSeq" id="NP_001274443.1">
    <molecule id="P53566-5"/>
    <property type="nucleotide sequence ID" value="NM_001287514.1"/>
</dbReference>
<dbReference type="RefSeq" id="NP_001274444.1">
    <molecule id="P53566-3"/>
    <property type="nucleotide sequence ID" value="NM_001287515.1"/>
</dbReference>
<dbReference type="RefSeq" id="NP_001274450.1">
    <molecule id="P53566-4"/>
    <property type="nucleotide sequence ID" value="NM_001287521.1"/>
</dbReference>
<dbReference type="RefSeq" id="NP_031704.2">
    <molecule id="P53566-1"/>
    <property type="nucleotide sequence ID" value="NM_007678.4"/>
</dbReference>
<dbReference type="SMR" id="P53566"/>
<dbReference type="BioGRID" id="198667">
    <property type="interactions" value="122"/>
</dbReference>
<dbReference type="ComplexPortal" id="CPX-65">
    <property type="entry name" value="bZIP transcription factor complex, Cebpa-Ddit3"/>
</dbReference>
<dbReference type="ComplexPortal" id="CPX-67">
    <property type="entry name" value="bZIP transcription factor complex, Cebpa-Cebpa"/>
</dbReference>
<dbReference type="CORUM" id="P53566"/>
<dbReference type="DIP" id="DIP-44054N"/>
<dbReference type="FunCoup" id="P53566">
    <property type="interactions" value="1056"/>
</dbReference>
<dbReference type="IntAct" id="P53566">
    <property type="interactions" value="13"/>
</dbReference>
<dbReference type="MINT" id="P53566"/>
<dbReference type="STRING" id="10090.ENSMUSP00000096129"/>
<dbReference type="ChEMBL" id="CHEMBL3616358"/>
<dbReference type="GlyGen" id="P53566">
    <property type="glycosylation" value="2 sites"/>
</dbReference>
<dbReference type="iPTMnet" id="P53566"/>
<dbReference type="PhosphoSitePlus" id="P53566"/>
<dbReference type="PaxDb" id="10090-ENSMUSP00000096129"/>
<dbReference type="ProteomicsDB" id="280052">
    <molecule id="P53566-1"/>
</dbReference>
<dbReference type="ProteomicsDB" id="280053">
    <molecule id="P53566-3"/>
</dbReference>
<dbReference type="ProteomicsDB" id="280054">
    <molecule id="P53566-4"/>
</dbReference>
<dbReference type="ProteomicsDB" id="280055">
    <molecule id="P53566-5"/>
</dbReference>
<dbReference type="Antibodypedia" id="38083">
    <property type="antibodies" value="711 antibodies from 41 providers"/>
</dbReference>
<dbReference type="DNASU" id="12606"/>
<dbReference type="Ensembl" id="ENSMUST00000042985.11">
    <molecule id="P53566-1"/>
    <property type="protein sequence ID" value="ENSMUSP00000096129.5"/>
    <property type="gene ID" value="ENSMUSG00000034957.11"/>
</dbReference>
<dbReference type="GeneID" id="12606"/>
<dbReference type="KEGG" id="mmu:12606"/>
<dbReference type="UCSC" id="uc009gjl.2">
    <molecule id="P53566-1"/>
    <property type="organism name" value="mouse"/>
</dbReference>
<dbReference type="AGR" id="MGI:99480"/>
<dbReference type="CTD" id="1050"/>
<dbReference type="MGI" id="MGI:99480">
    <property type="gene designation" value="Cebpa"/>
</dbReference>
<dbReference type="VEuPathDB" id="HostDB:ENSMUSG00000034957"/>
<dbReference type="eggNOG" id="KOG3119">
    <property type="taxonomic scope" value="Eukaryota"/>
</dbReference>
<dbReference type="GeneTree" id="ENSGT00940000162646"/>
<dbReference type="HOGENOM" id="CLU_043327_2_0_1"/>
<dbReference type="InParanoid" id="P53566"/>
<dbReference type="OMA" id="QMPHLQY"/>
<dbReference type="OrthoDB" id="10032067at2759"/>
<dbReference type="PhylomeDB" id="P53566"/>
<dbReference type="TreeFam" id="TF105008"/>
<dbReference type="Reactome" id="R-MMU-9616222">
    <property type="pathway name" value="Transcriptional regulation of granulopoiesis"/>
</dbReference>
<dbReference type="BioGRID-ORCS" id="12606">
    <property type="hits" value="4 hits in 81 CRISPR screens"/>
</dbReference>
<dbReference type="PRO" id="PR:P53566"/>
<dbReference type="Proteomes" id="UP000000589">
    <property type="component" value="Chromosome 7"/>
</dbReference>
<dbReference type="RNAct" id="P53566">
    <property type="molecule type" value="protein"/>
</dbReference>
<dbReference type="Bgee" id="ENSMUSG00000034957">
    <property type="expression patterns" value="Expressed in thoracic mammary gland and 170 other cell types or tissues"/>
</dbReference>
<dbReference type="ExpressionAtlas" id="P53566">
    <property type="expression patterns" value="baseline and differential"/>
</dbReference>
<dbReference type="GO" id="GO:1990647">
    <property type="term" value="C:C/EBP complex"/>
    <property type="evidence" value="ECO:0000266"/>
    <property type="project" value="ComplexPortal"/>
</dbReference>
<dbReference type="GO" id="GO:0036488">
    <property type="term" value="C:CHOP-C/EBP complex"/>
    <property type="evidence" value="ECO:0000266"/>
    <property type="project" value="ComplexPortal"/>
</dbReference>
<dbReference type="GO" id="GO:0016363">
    <property type="term" value="C:nuclear matrix"/>
    <property type="evidence" value="ECO:0007669"/>
    <property type="project" value="Ensembl"/>
</dbReference>
<dbReference type="GO" id="GO:0005730">
    <property type="term" value="C:nucleolus"/>
    <property type="evidence" value="ECO:0000250"/>
    <property type="project" value="UniProtKB"/>
</dbReference>
<dbReference type="GO" id="GO:0005654">
    <property type="term" value="C:nucleoplasm"/>
    <property type="evidence" value="ECO:0000304"/>
    <property type="project" value="Reactome"/>
</dbReference>
<dbReference type="GO" id="GO:0005634">
    <property type="term" value="C:nucleus"/>
    <property type="evidence" value="ECO:0000314"/>
    <property type="project" value="UniProtKB"/>
</dbReference>
<dbReference type="GO" id="GO:0035189">
    <property type="term" value="C:Rb-E2F complex"/>
    <property type="evidence" value="ECO:0007669"/>
    <property type="project" value="Ensembl"/>
</dbReference>
<dbReference type="GO" id="GO:0005667">
    <property type="term" value="C:transcription regulator complex"/>
    <property type="evidence" value="ECO:0000314"/>
    <property type="project" value="MGI"/>
</dbReference>
<dbReference type="GO" id="GO:0003682">
    <property type="term" value="F:chromatin binding"/>
    <property type="evidence" value="ECO:0000314"/>
    <property type="project" value="MGI"/>
</dbReference>
<dbReference type="GO" id="GO:0031490">
    <property type="term" value="F:chromatin DNA binding"/>
    <property type="evidence" value="ECO:0000314"/>
    <property type="project" value="MGI"/>
</dbReference>
<dbReference type="GO" id="GO:0003677">
    <property type="term" value="F:DNA binding"/>
    <property type="evidence" value="ECO:0000314"/>
    <property type="project" value="MGI"/>
</dbReference>
<dbReference type="GO" id="GO:0001228">
    <property type="term" value="F:DNA-binding transcription activator activity, RNA polymerase II-specific"/>
    <property type="evidence" value="ECO:0000314"/>
    <property type="project" value="UniProtKB"/>
</dbReference>
<dbReference type="GO" id="GO:0003700">
    <property type="term" value="F:DNA-binding transcription factor activity"/>
    <property type="evidence" value="ECO:0000314"/>
    <property type="project" value="MGI"/>
</dbReference>
<dbReference type="GO" id="GO:0000981">
    <property type="term" value="F:DNA-binding transcription factor activity, RNA polymerase II-specific"/>
    <property type="evidence" value="ECO:0000314"/>
    <property type="project" value="MGI"/>
</dbReference>
<dbReference type="GO" id="GO:0140297">
    <property type="term" value="F:DNA-binding transcription factor binding"/>
    <property type="evidence" value="ECO:0000353"/>
    <property type="project" value="UniProtKB"/>
</dbReference>
<dbReference type="GO" id="GO:0042826">
    <property type="term" value="F:histone deacetylase binding"/>
    <property type="evidence" value="ECO:0007669"/>
    <property type="project" value="Ensembl"/>
</dbReference>
<dbReference type="GO" id="GO:0071837">
    <property type="term" value="F:HMG box domain binding"/>
    <property type="evidence" value="ECO:0007669"/>
    <property type="project" value="Ensembl"/>
</dbReference>
<dbReference type="GO" id="GO:0042802">
    <property type="term" value="F:identical protein binding"/>
    <property type="evidence" value="ECO:0000353"/>
    <property type="project" value="MGI"/>
</dbReference>
<dbReference type="GO" id="GO:0019900">
    <property type="term" value="F:kinase binding"/>
    <property type="evidence" value="ECO:0000353"/>
    <property type="project" value="UniProtKB"/>
</dbReference>
<dbReference type="GO" id="GO:0046982">
    <property type="term" value="F:protein heterodimerization activity"/>
    <property type="evidence" value="ECO:0007669"/>
    <property type="project" value="Ensembl"/>
</dbReference>
<dbReference type="GO" id="GO:0042803">
    <property type="term" value="F:protein homodimerization activity"/>
    <property type="evidence" value="ECO:0007669"/>
    <property type="project" value="Ensembl"/>
</dbReference>
<dbReference type="GO" id="GO:0044877">
    <property type="term" value="F:protein-containing complex binding"/>
    <property type="evidence" value="ECO:0007669"/>
    <property type="project" value="Ensembl"/>
</dbReference>
<dbReference type="GO" id="GO:0001163">
    <property type="term" value="F:RNA polymerase I transcription regulatory region sequence-specific DNA binding"/>
    <property type="evidence" value="ECO:0000250"/>
    <property type="project" value="UniProtKB"/>
</dbReference>
<dbReference type="GO" id="GO:0000978">
    <property type="term" value="F:RNA polymerase II cis-regulatory region sequence-specific DNA binding"/>
    <property type="evidence" value="ECO:0000314"/>
    <property type="project" value="NTNU_SB"/>
</dbReference>
<dbReference type="GO" id="GO:0043565">
    <property type="term" value="F:sequence-specific DNA binding"/>
    <property type="evidence" value="ECO:0000314"/>
    <property type="project" value="UniProtKB"/>
</dbReference>
<dbReference type="GO" id="GO:0097677">
    <property type="term" value="F:STAT family protein binding"/>
    <property type="evidence" value="ECO:0000250"/>
    <property type="project" value="UniProtKB"/>
</dbReference>
<dbReference type="GO" id="GO:0000976">
    <property type="term" value="F:transcription cis-regulatory region binding"/>
    <property type="evidence" value="ECO:0000314"/>
    <property type="project" value="MGI"/>
</dbReference>
<dbReference type="GO" id="GO:0008134">
    <property type="term" value="F:transcription factor binding"/>
    <property type="evidence" value="ECO:0000353"/>
    <property type="project" value="GO_Central"/>
</dbReference>
<dbReference type="GO" id="GO:0006953">
    <property type="term" value="P:acute-phase response"/>
    <property type="evidence" value="ECO:0007669"/>
    <property type="project" value="Ensembl"/>
</dbReference>
<dbReference type="GO" id="GO:0031100">
    <property type="term" value="P:animal organ regeneration"/>
    <property type="evidence" value="ECO:0007669"/>
    <property type="project" value="Ensembl"/>
</dbReference>
<dbReference type="GO" id="GO:0050873">
    <property type="term" value="P:brown fat cell differentiation"/>
    <property type="evidence" value="ECO:0000314"/>
    <property type="project" value="MGI"/>
</dbReference>
<dbReference type="GO" id="GO:0008283">
    <property type="term" value="P:cell population proliferation"/>
    <property type="evidence" value="ECO:0000315"/>
    <property type="project" value="MGI"/>
</dbReference>
<dbReference type="GO" id="GO:0071285">
    <property type="term" value="P:cellular response to lithium ion"/>
    <property type="evidence" value="ECO:0000314"/>
    <property type="project" value="MGI"/>
</dbReference>
<dbReference type="GO" id="GO:0071356">
    <property type="term" value="P:cellular response to tumor necrosis factor"/>
    <property type="evidence" value="ECO:0000314"/>
    <property type="project" value="MGI"/>
</dbReference>
<dbReference type="GO" id="GO:0071466">
    <property type="term" value="P:cellular response to xenobiotic stimulus"/>
    <property type="evidence" value="ECO:0007669"/>
    <property type="project" value="Ensembl"/>
</dbReference>
<dbReference type="GO" id="GO:0008203">
    <property type="term" value="P:cholesterol metabolic process"/>
    <property type="evidence" value="ECO:0000315"/>
    <property type="project" value="MGI"/>
</dbReference>
<dbReference type="GO" id="GO:0019221">
    <property type="term" value="P:cytokine-mediated signaling pathway"/>
    <property type="evidence" value="ECO:0000303"/>
    <property type="project" value="UniProtKB"/>
</dbReference>
<dbReference type="GO" id="GO:0006351">
    <property type="term" value="P:DNA-templated transcription"/>
    <property type="evidence" value="ECO:0007669"/>
    <property type="project" value="InterPro"/>
</dbReference>
<dbReference type="GO" id="GO:0001892">
    <property type="term" value="P:embryonic placenta development"/>
    <property type="evidence" value="ECO:0000316"/>
    <property type="project" value="MGI"/>
</dbReference>
<dbReference type="GO" id="GO:0097009">
    <property type="term" value="P:energy homeostasis"/>
    <property type="evidence" value="ECO:0000314"/>
    <property type="project" value="UniProtKB"/>
</dbReference>
<dbReference type="GO" id="GO:0002070">
    <property type="term" value="P:epithelial cell maturation"/>
    <property type="evidence" value="ECO:0000315"/>
    <property type="project" value="MGI"/>
</dbReference>
<dbReference type="GO" id="GO:0045444">
    <property type="term" value="P:fat cell differentiation"/>
    <property type="evidence" value="ECO:0000314"/>
    <property type="project" value="UniProtKB"/>
</dbReference>
<dbReference type="GO" id="GO:0042593">
    <property type="term" value="P:glucose homeostasis"/>
    <property type="evidence" value="ECO:0000315"/>
    <property type="project" value="UniProtKB"/>
</dbReference>
<dbReference type="GO" id="GO:0030851">
    <property type="term" value="P:granulocyte differentiation"/>
    <property type="evidence" value="ECO:0000314"/>
    <property type="project" value="UniProtKB"/>
</dbReference>
<dbReference type="GO" id="GO:0071425">
    <property type="term" value="P:hematopoietic stem cell proliferation"/>
    <property type="evidence" value="ECO:0000315"/>
    <property type="project" value="MGI"/>
</dbReference>
<dbReference type="GO" id="GO:0048839">
    <property type="term" value="P:inner ear development"/>
    <property type="evidence" value="ECO:0000314"/>
    <property type="project" value="MGI"/>
</dbReference>
<dbReference type="GO" id="GO:0070102">
    <property type="term" value="P:interleukin-6-mediated signaling pathway"/>
    <property type="evidence" value="ECO:0007669"/>
    <property type="project" value="Ensembl"/>
</dbReference>
<dbReference type="GO" id="GO:0055088">
    <property type="term" value="P:lipid homeostasis"/>
    <property type="evidence" value="ECO:0000315"/>
    <property type="project" value="UniProtKB"/>
</dbReference>
<dbReference type="GO" id="GO:0001889">
    <property type="term" value="P:liver development"/>
    <property type="evidence" value="ECO:0000315"/>
    <property type="project" value="UniProtKB"/>
</dbReference>
<dbReference type="GO" id="GO:0030324">
    <property type="term" value="P:lung development"/>
    <property type="evidence" value="ECO:0000315"/>
    <property type="project" value="UniProtKB"/>
</dbReference>
<dbReference type="GO" id="GO:0030225">
    <property type="term" value="P:macrophage differentiation"/>
    <property type="evidence" value="ECO:0000315"/>
    <property type="project" value="MGI"/>
</dbReference>
<dbReference type="GO" id="GO:0007613">
    <property type="term" value="P:memory"/>
    <property type="evidence" value="ECO:0007669"/>
    <property type="project" value="Ensembl"/>
</dbReference>
<dbReference type="GO" id="GO:0007005">
    <property type="term" value="P:mitochondrion organization"/>
    <property type="evidence" value="ECO:0000315"/>
    <property type="project" value="MGI"/>
</dbReference>
<dbReference type="GO" id="GO:0030099">
    <property type="term" value="P:myeloid cell differentiation"/>
    <property type="evidence" value="ECO:0000314"/>
    <property type="project" value="UniProtKB"/>
</dbReference>
<dbReference type="GO" id="GO:0045786">
    <property type="term" value="P:negative regulation of cell cycle"/>
    <property type="evidence" value="ECO:0000314"/>
    <property type="project" value="UniProtKB"/>
</dbReference>
<dbReference type="GO" id="GO:0008285">
    <property type="term" value="P:negative regulation of cell population proliferation"/>
    <property type="evidence" value="ECO:0000314"/>
    <property type="project" value="UniProtKB"/>
</dbReference>
<dbReference type="GO" id="GO:0045892">
    <property type="term" value="P:negative regulation of DNA-templated transcription"/>
    <property type="evidence" value="ECO:0000314"/>
    <property type="project" value="UniProtKB"/>
</dbReference>
<dbReference type="GO" id="GO:1902034">
    <property type="term" value="P:negative regulation of hematopoietic stem cell proliferation"/>
    <property type="evidence" value="ECO:0000315"/>
    <property type="project" value="MGI"/>
</dbReference>
<dbReference type="GO" id="GO:0000122">
    <property type="term" value="P:negative regulation of transcription by RNA polymerase II"/>
    <property type="evidence" value="ECO:0000314"/>
    <property type="project" value="MGI"/>
</dbReference>
<dbReference type="GO" id="GO:0007219">
    <property type="term" value="P:Notch signaling pathway"/>
    <property type="evidence" value="ECO:0000314"/>
    <property type="project" value="MGI"/>
</dbReference>
<dbReference type="GO" id="GO:0002076">
    <property type="term" value="P:osteoblast development"/>
    <property type="evidence" value="ECO:0007669"/>
    <property type="project" value="Ensembl"/>
</dbReference>
<dbReference type="GO" id="GO:0045893">
    <property type="term" value="P:positive regulation of DNA-templated transcription"/>
    <property type="evidence" value="ECO:0000314"/>
    <property type="project" value="MGI"/>
</dbReference>
<dbReference type="GO" id="GO:0045600">
    <property type="term" value="P:positive regulation of fat cell differentiation"/>
    <property type="evidence" value="ECO:0000314"/>
    <property type="project" value="MGI"/>
</dbReference>
<dbReference type="GO" id="GO:0010628">
    <property type="term" value="P:positive regulation of gene expression"/>
    <property type="evidence" value="ECO:0000315"/>
    <property type="project" value="ARUK-UCL"/>
</dbReference>
<dbReference type="GO" id="GO:0050729">
    <property type="term" value="P:positive regulation of inflammatory response"/>
    <property type="evidence" value="ECO:0000315"/>
    <property type="project" value="ARUK-UCL"/>
</dbReference>
<dbReference type="GO" id="GO:0043032">
    <property type="term" value="P:positive regulation of macrophage activation"/>
    <property type="evidence" value="ECO:0000315"/>
    <property type="project" value="ARUK-UCL"/>
</dbReference>
<dbReference type="GO" id="GO:0045669">
    <property type="term" value="P:positive regulation of osteoblast differentiation"/>
    <property type="evidence" value="ECO:0000314"/>
    <property type="project" value="MGI"/>
</dbReference>
<dbReference type="GO" id="GO:0045944">
    <property type="term" value="P:positive regulation of transcription by RNA polymerase II"/>
    <property type="evidence" value="ECO:0000314"/>
    <property type="project" value="NTNU_SB"/>
</dbReference>
<dbReference type="GO" id="GO:0042127">
    <property type="term" value="P:regulation of cell population proliferation"/>
    <property type="evidence" value="ECO:0000315"/>
    <property type="project" value="MGI"/>
</dbReference>
<dbReference type="GO" id="GO:0006355">
    <property type="term" value="P:regulation of DNA-templated transcription"/>
    <property type="evidence" value="ECO:0000314"/>
    <property type="project" value="MGI"/>
</dbReference>
<dbReference type="GO" id="GO:0006357">
    <property type="term" value="P:regulation of transcription by RNA polymerase II"/>
    <property type="evidence" value="ECO:0000314"/>
    <property type="project" value="GO_Central"/>
</dbReference>
<dbReference type="GO" id="GO:0071548">
    <property type="term" value="P:response to dexamethasone"/>
    <property type="evidence" value="ECO:0007669"/>
    <property type="project" value="Ensembl"/>
</dbReference>
<dbReference type="GO" id="GO:0080184">
    <property type="term" value="P:response to phenylpropanoid"/>
    <property type="evidence" value="ECO:0007669"/>
    <property type="project" value="Ensembl"/>
</dbReference>
<dbReference type="GO" id="GO:0033274">
    <property type="term" value="P:response to vitamin B2"/>
    <property type="evidence" value="ECO:0007669"/>
    <property type="project" value="Ensembl"/>
</dbReference>
<dbReference type="GO" id="GO:0006360">
    <property type="term" value="P:transcription by RNA polymerase I"/>
    <property type="evidence" value="ECO:0000250"/>
    <property type="project" value="UniProtKB"/>
</dbReference>
<dbReference type="GO" id="GO:0000050">
    <property type="term" value="P:urea cycle"/>
    <property type="evidence" value="ECO:0000314"/>
    <property type="project" value="MGI"/>
</dbReference>
<dbReference type="GO" id="GO:0050872">
    <property type="term" value="P:white fat cell differentiation"/>
    <property type="evidence" value="ECO:0000315"/>
    <property type="project" value="MGI"/>
</dbReference>
<dbReference type="CDD" id="cd14711">
    <property type="entry name" value="bZIP_CEBPA"/>
    <property type="match status" value="1"/>
</dbReference>
<dbReference type="FunFam" id="1.20.5.170:FF:000028">
    <property type="entry name" value="CCAAT/enhancer-binding protein beta"/>
    <property type="match status" value="1"/>
</dbReference>
<dbReference type="Gene3D" id="1.20.5.170">
    <property type="match status" value="1"/>
</dbReference>
<dbReference type="InterPro" id="IPR004827">
    <property type="entry name" value="bZIP"/>
</dbReference>
<dbReference type="InterPro" id="IPR046347">
    <property type="entry name" value="bZIP_sf"/>
</dbReference>
<dbReference type="InterPro" id="IPR031106">
    <property type="entry name" value="C/EBP"/>
</dbReference>
<dbReference type="InterPro" id="IPR016468">
    <property type="entry name" value="C/EBP_chordates"/>
</dbReference>
<dbReference type="PANTHER" id="PTHR23334">
    <property type="entry name" value="CCAAT/ENHANCER BINDING PROTEIN"/>
    <property type="match status" value="1"/>
</dbReference>
<dbReference type="PANTHER" id="PTHR23334:SF5">
    <property type="entry name" value="CCAAT_ENHANCER-BINDING PROTEIN ALPHA"/>
    <property type="match status" value="1"/>
</dbReference>
<dbReference type="Pfam" id="PF07716">
    <property type="entry name" value="bZIP_2"/>
    <property type="match status" value="1"/>
</dbReference>
<dbReference type="PIRSF" id="PIRSF005879">
    <property type="entry name" value="CCAAT/enhancer-binding"/>
    <property type="match status" value="1"/>
</dbReference>
<dbReference type="SMART" id="SM00338">
    <property type="entry name" value="BRLZ"/>
    <property type="match status" value="1"/>
</dbReference>
<dbReference type="SUPFAM" id="SSF57959">
    <property type="entry name" value="Leucine zipper domain"/>
    <property type="match status" value="1"/>
</dbReference>
<dbReference type="PROSITE" id="PS50217">
    <property type="entry name" value="BZIP"/>
    <property type="match status" value="1"/>
</dbReference>
<organism>
    <name type="scientific">Mus musculus</name>
    <name type="common">Mouse</name>
    <dbReference type="NCBI Taxonomy" id="10090"/>
    <lineage>
        <taxon>Eukaryota</taxon>
        <taxon>Metazoa</taxon>
        <taxon>Chordata</taxon>
        <taxon>Craniata</taxon>
        <taxon>Vertebrata</taxon>
        <taxon>Euteleostomi</taxon>
        <taxon>Mammalia</taxon>
        <taxon>Eutheria</taxon>
        <taxon>Euarchontoglires</taxon>
        <taxon>Glires</taxon>
        <taxon>Rodentia</taxon>
        <taxon>Myomorpha</taxon>
        <taxon>Muroidea</taxon>
        <taxon>Muridae</taxon>
        <taxon>Murinae</taxon>
        <taxon>Mus</taxon>
        <taxon>Mus</taxon>
    </lineage>
</organism>
<proteinExistence type="evidence at protein level"/>
<comment type="function">
    <text evidence="1 2 5 6 7 8 9 10 11 12 13 16 18 19 20 21">Transcription factor that coordinates proliferation arrest and the differentiation of myeloid progenitors, adipocytes, hepatocytes, and cells of the lung and the placenta (PubMed:15107404, PubMed:15589173, PubMed:36228616, PubMed:8415748). Binds directly to the consensus DNA sequence 5'-T[TG]NNGNAA[TG]-3' acting as an activator on distinct target genes. During early embryogenesis, plays essential and redundant functions with CEBPB (PubMed:15509779). Essential for the transition from common myeloid progenitors (CMP) to granulocyte/monocyte progenitors (GMP) (PubMed:24367003). Critical for the proper development of the liver and the lung (PubMed:8798745). Necessary for terminal adipocyte differentiation, is required for postnatal maintenance of systemic energy homeostasis and lipid storage (PubMed:1935900, PubMed:8090719). To regulate these different processes at the proper moment and tissue, interplays with other transcription factors and modulators. Down-regulates the expression of genes that maintain cells in an undifferentiated and proliferative state through E2F1 repression, which is critical for its ability to induce adipocyte and granulocyte terminal differentiation. Reciprocally E2F1 blocks adipocyte differentiation by binding to specific promoters and repressing CEBPA binding to its target gene promoters (PubMed:11672531). Proliferation arrest also depends on a functional binding to SWI/SNF complex (PubMed:14660596). In liver, regulates gluconeogenesis and lipogenesis through different mechanisms. To regulate gluconeogenesis, functionally cooperates with FOXO1 binding to IRE-controlled promoters and regulating the expression of target genes such as PCK1 or G6PC1 (PubMed:17627282). To modulate lipogenesis, interacts and transcriptionally synergizes with SREBF1 in promoter activation of specific lipogenic target genes such as ACAS2 (PubMed:17290224). In adipose tissue, seems to act as FOXO1 coactivator accessing to ADIPOQ promoter through FOXO1 binding sites (PubMed:17090532).</text>
</comment>
<comment type="function">
    <molecule>Isoform 3</molecule>
    <text evidence="1 2 20">Can act as dominant-negative. Binds DNA and have transctivation activity, even if much less efficiently than isoform 2. Does not inhibit cell proliferation.</text>
</comment>
<comment type="function">
    <molecule>Isoform 4</molecule>
    <text evidence="2">Directly and specifically enhances ribosomal DNA transcription interacting with RNA polymerase I-specific cofactors and inducing histone acetylation.</text>
</comment>
<comment type="subunit">
    <text evidence="1 2 7 10 11 12 14 15 17 18">Binds DNA as a homodimer and as a heterodimer. Can form stable heterodimers with CEBPB, CEBPD, CEBPE and CEBPG (By similarity). Interacts with PRDM16 (PubMed:19641492). Interacts with UBN1 (By similarity). Interacts with ZNF638; this interaction increases transcriptional activation (PubMed:21602272). Interacts with the complex TFDP2:E2F1; the interaction prevents CEBPA binding to target gene promoters and represses its transcriptional activity (By similarity). Interacts with RB1 (PubMed:15107404). Interacts (when phosphorylated at Ser-193) with CDK2, CDK4, E2F4 and SMARCA2 (PubMed:15107404). Interacts with SREBPF1 (PubMed:17290224). Interacts with FOXO1 (via the Fork-head domain); the interaction increases when FOXO1 is deacetylated (PubMed:17090532, PubMed:17627282). Interacts with SIX1 (PubMed:27923061). Interacts (via recognition sequence) with TRIB1 (By similarity). Interacts (via bZIP domain) with OVOL2 (via zinc-finger domains); the interaction inhibits the transcription factor activity of CEBPA and is required to repress adipogenesis (PubMed:36228616).</text>
</comment>
<comment type="subunit">
    <molecule>Isoform 1</molecule>
    <text evidence="2">Interacts with TAF1A and UBTF.</text>
</comment>
<comment type="subunit">
    <molecule>Isoform 4</molecule>
    <text evidence="2">Interacts with TAF1A and UBTF (By similarity). Interacts with NPM1 (By similarity).</text>
</comment>
<comment type="interaction">
    <interactant intactId="EBI-2644207">
        <id>P53566</id>
    </interactant>
    <interactant intactId="EBI-1371343">
        <id>Q9R1E0</id>
        <label>Foxo1</label>
    </interactant>
    <organismsDiffer>false</organismsDiffer>
    <experiments>5</experiments>
</comment>
<comment type="interaction">
    <interactant intactId="EBI-2644207">
        <id>P53566</id>
    </interactant>
    <interactant intactId="EBI-1216284">
        <id>Q6ZQ88</id>
        <label>Kdm1a</label>
    </interactant>
    <organismsDiffer>false</organismsDiffer>
    <experiments>4</experiments>
</comment>
<comment type="subcellular location">
    <subcellularLocation>
        <location evidence="18 20">Nucleus</location>
    </subcellularLocation>
</comment>
<comment type="subcellular location">
    <molecule>Isoform 4</molecule>
    <subcellularLocation>
        <location evidence="1 2">Nucleus</location>
        <location evidence="1 2">Nucleolus</location>
    </subcellularLocation>
</comment>
<comment type="alternative products">
    <event type="alternative initiation"/>
    <isoform>
        <id>P53566-1</id>
        <name>1</name>
        <sequence type="displayed"/>
    </isoform>
    <isoform>
        <id>P53566-3</id>
        <name>2</name>
        <name evidence="24">C/EBPalpha-p42</name>
        <sequence type="described" ref="VSP_057550"/>
    </isoform>
    <isoform>
        <id>P53566-4</id>
        <name>3</name>
        <name evidence="24">C/EBPalpha-p30</name>
        <sequence type="described" ref="VSP_057549"/>
    </isoform>
    <isoform>
        <id>P53566-5</id>
        <name>4</name>
        <name evidence="23">extended-C/EBPalpha</name>
        <sequence type="described" ref="VSP_057608"/>
    </isoform>
</comment>
<comment type="tissue specificity">
    <text evidence="20">Isoform 2 and isoform 3 are expressed in adipose tissue and liver (at protein level).</text>
</comment>
<comment type="developmental stage">
    <text evidence="8">At 9.5 dpc, expressed in the chorionic plate. From 10.5 to at least 11.5 dpc, is also expressed in the trophoblasts of the labyrinthine layer.</text>
</comment>
<comment type="domain">
    <text evidence="2">The recognition sequence (54-72) is required for interaction with TRIB1.</text>
</comment>
<comment type="PTM">
    <text evidence="1">Sumoylated, sumoylation blocks the inhibitory effect on cell proliferation by disrupting the interaction with SMARCA2.</text>
</comment>
<comment type="PTM">
    <text evidence="7 11">Phosphorylation at Ser-193 is required for interaction with CDK2, CDK4 and SWI/SNF complex leading to cell cycle inhibition. Dephosphorylated at Ser-193 by protein phosphatase 2A (PP2A) through PI3K/AKT signaling pathway regulation (PubMed:15107404). Phosphorylation at Thr-222 and Thr-226 by GSK3 is constitutive in adipose tissue and lung. In liver, both Thr-222 and Thr-226 are phosphorylated only during feeding but not during fasting (PubMed:17290224). Phosphorylation of the GSK3 consensus sites selectively decreases transactivation activity on IRE-controlled promoters (PubMed:17290224).</text>
</comment>
<comment type="PTM">
    <text evidence="2">Ubiquitinated by COP1 upon interaction with TRIB1.</text>
</comment>
<comment type="disruption phenotype">
    <text evidence="8 9 21">Mutants die of hypoglycemia at 7-10 hours after birth. They have defects in the control of hepatic growth and lung development. The liver architecture is disturbed with acinar formation. They show hyperproliferation of type II pneumocytes and disturbed alveolar architecture. At the molecular level, accumulation of glycogen and lipids in the liver and adipose tissues is impaired, and the mutant animals are severely hypoglycemic (PubMed:8798745). In very few cases (less than 1%) mutants are able to survive up to 4 weeks but they are sevrely retarded in development. At 2 weeks, they are about half the size of their littermates, very thin and with skin problems. Conditional knockout in adults leads to a lack of granulopoiesis in all hematopoietic organs with no mature peripheral blood granulocytes and the presence of &gt;30% immature myeloid cells in the bone marrow, but without anemia or thrombocytopenia. Animals rarely survive 4 to 5 weeks of age due to sepsis as a result of granulocytopenia (PubMed:15589173). Double knockout CEBPA and CEBPB results in embryonic developmental arrest and death at around 10 dpc to 11 dpc, associated with a gross placenta failure (PubMed:15509779).</text>
</comment>
<comment type="similarity">
    <text evidence="25">Belongs to the bZIP family. C/EBP subfamily.</text>
</comment>
<name>CEBPA_MOUSE</name>
<evidence type="ECO:0000250" key="1">
    <source>
        <dbReference type="UniProtKB" id="P05554"/>
    </source>
</evidence>
<evidence type="ECO:0000250" key="2">
    <source>
        <dbReference type="UniProtKB" id="P49715"/>
    </source>
</evidence>
<evidence type="ECO:0000255" key="3">
    <source>
        <dbReference type="PROSITE-ProRule" id="PRU00978"/>
    </source>
</evidence>
<evidence type="ECO:0000256" key="4">
    <source>
        <dbReference type="SAM" id="MobiDB-lite"/>
    </source>
</evidence>
<evidence type="ECO:0000269" key="5">
    <source>
    </source>
</evidence>
<evidence type="ECO:0000269" key="6">
    <source>
    </source>
</evidence>
<evidence type="ECO:0000269" key="7">
    <source>
    </source>
</evidence>
<evidence type="ECO:0000269" key="8">
    <source>
    </source>
</evidence>
<evidence type="ECO:0000269" key="9">
    <source>
    </source>
</evidence>
<evidence type="ECO:0000269" key="10">
    <source>
    </source>
</evidence>
<evidence type="ECO:0000269" key="11">
    <source>
    </source>
</evidence>
<evidence type="ECO:0000269" key="12">
    <source>
    </source>
</evidence>
<evidence type="ECO:0000269" key="13">
    <source>
    </source>
</evidence>
<evidence type="ECO:0000269" key="14">
    <source>
    </source>
</evidence>
<evidence type="ECO:0000269" key="15">
    <source>
    </source>
</evidence>
<evidence type="ECO:0000269" key="16">
    <source>
    </source>
</evidence>
<evidence type="ECO:0000269" key="17">
    <source>
    </source>
</evidence>
<evidence type="ECO:0000269" key="18">
    <source>
    </source>
</evidence>
<evidence type="ECO:0000269" key="19">
    <source>
    </source>
</evidence>
<evidence type="ECO:0000269" key="20">
    <source>
    </source>
</evidence>
<evidence type="ECO:0000269" key="21">
    <source>
    </source>
</evidence>
<evidence type="ECO:0000303" key="22">
    <source>
    </source>
</evidence>
<evidence type="ECO:0000303" key="23">
    <source>
    </source>
</evidence>
<evidence type="ECO:0000303" key="24">
    <source>
    </source>
</evidence>
<evidence type="ECO:0000305" key="25"/>
<evidence type="ECO:0000305" key="26">
    <source>
    </source>
</evidence>
<evidence type="ECO:0000312" key="27">
    <source>
        <dbReference type="MGI" id="MGI:99480"/>
    </source>
</evidence>
<protein>
    <recommendedName>
        <fullName evidence="27">CCAAT/enhancer-binding protein alpha</fullName>
        <shortName evidence="27">C/EBP alpha</shortName>
    </recommendedName>
</protein>